<proteinExistence type="inferred from homology"/>
<gene>
    <name evidence="1" type="primary">feoC</name>
    <name type="ORF">ORF2</name>
</gene>
<keyword id="KW-0238">DNA-binding</keyword>
<keyword id="KW-0408">Iron</keyword>
<keyword id="KW-0411">Iron-sulfur</keyword>
<keyword id="KW-0479">Metal-binding</keyword>
<keyword id="KW-0678">Repressor</keyword>
<keyword id="KW-0804">Transcription</keyword>
<keyword id="KW-0805">Transcription regulation</keyword>
<evidence type="ECO:0000255" key="1">
    <source>
        <dbReference type="HAMAP-Rule" id="MF_01586"/>
    </source>
</evidence>
<organism>
    <name type="scientific">Serratia marcescens</name>
    <dbReference type="NCBI Taxonomy" id="615"/>
    <lineage>
        <taxon>Bacteria</taxon>
        <taxon>Pseudomonadati</taxon>
        <taxon>Pseudomonadota</taxon>
        <taxon>Gammaproteobacteria</taxon>
        <taxon>Enterobacterales</taxon>
        <taxon>Yersiniaceae</taxon>
        <taxon>Serratia</taxon>
    </lineage>
</organism>
<protein>
    <recommendedName>
        <fullName evidence="1">Probable [Fe-S]-dependent transcriptional repressor</fullName>
    </recommendedName>
</protein>
<name>FEOC_SERMA</name>
<dbReference type="EMBL" id="AB089611">
    <property type="protein sequence ID" value="BAC53663.1"/>
    <property type="molecule type" value="Genomic_DNA"/>
</dbReference>
<dbReference type="SMR" id="Q8GHK8"/>
<dbReference type="STRING" id="273526.SMDB11_3874"/>
<dbReference type="GO" id="GO:0003677">
    <property type="term" value="F:DNA binding"/>
    <property type="evidence" value="ECO:0007669"/>
    <property type="project" value="UniProtKB-KW"/>
</dbReference>
<dbReference type="GO" id="GO:0005506">
    <property type="term" value="F:iron ion binding"/>
    <property type="evidence" value="ECO:0007669"/>
    <property type="project" value="UniProtKB-UniRule"/>
</dbReference>
<dbReference type="GO" id="GO:0051536">
    <property type="term" value="F:iron-sulfur cluster binding"/>
    <property type="evidence" value="ECO:0007669"/>
    <property type="project" value="UniProtKB-KW"/>
</dbReference>
<dbReference type="Gene3D" id="1.10.10.10">
    <property type="entry name" value="Winged helix-like DNA-binding domain superfamily/Winged helix DNA-binding domain"/>
    <property type="match status" value="1"/>
</dbReference>
<dbReference type="HAMAP" id="MF_01586">
    <property type="entry name" value="FeoC"/>
    <property type="match status" value="1"/>
</dbReference>
<dbReference type="InterPro" id="IPR023732">
    <property type="entry name" value="FeoC"/>
</dbReference>
<dbReference type="InterPro" id="IPR015102">
    <property type="entry name" value="Tscrpt_reg_HTH_FeoC"/>
</dbReference>
<dbReference type="InterPro" id="IPR036388">
    <property type="entry name" value="WH-like_DNA-bd_sf"/>
</dbReference>
<dbReference type="InterPro" id="IPR036390">
    <property type="entry name" value="WH_DNA-bd_sf"/>
</dbReference>
<dbReference type="Pfam" id="PF09012">
    <property type="entry name" value="FeoC"/>
    <property type="match status" value="1"/>
</dbReference>
<dbReference type="SUPFAM" id="SSF46785">
    <property type="entry name" value="Winged helix' DNA-binding domain"/>
    <property type="match status" value="1"/>
</dbReference>
<feature type="chain" id="PRO_0000313067" description="Probable [Fe-S]-dependent transcriptional repressor">
    <location>
        <begin position="1"/>
        <end position="75"/>
    </location>
</feature>
<feature type="binding site" evidence="1">
    <location>
        <position position="55"/>
    </location>
    <ligand>
        <name>iron-sulfur cluster</name>
        <dbReference type="ChEBI" id="CHEBI:30408"/>
    </ligand>
</feature>
<feature type="binding site" evidence="1">
    <location>
        <position position="60"/>
    </location>
    <ligand>
        <name>iron-sulfur cluster</name>
        <dbReference type="ChEBI" id="CHEBI:30408"/>
    </ligand>
</feature>
<feature type="binding site" evidence="1">
    <location>
        <position position="63"/>
    </location>
    <ligand>
        <name>iron-sulfur cluster</name>
        <dbReference type="ChEBI" id="CHEBI:30408"/>
    </ligand>
</feature>
<feature type="binding site" evidence="1">
    <location>
        <position position="72"/>
    </location>
    <ligand>
        <name>iron-sulfur cluster</name>
        <dbReference type="ChEBI" id="CHEBI:30408"/>
    </ligand>
</feature>
<reference key="1">
    <citation type="journal article" date="2003" name="Gene">
        <title>The Serratia marcescens bioH gene encodes an esterase.</title>
        <authorList>
            <person name="Akatsuka H."/>
            <person name="Kawai E."/>
            <person name="Imai Y."/>
            <person name="Sakurai N."/>
            <person name="Omori K."/>
        </authorList>
    </citation>
    <scope>NUCLEOTIDE SEQUENCE [GENOMIC DNA]</scope>
    <source>
        <strain>Sr41 / 8000</strain>
    </source>
</reference>
<accession>Q8GHK8</accession>
<sequence>MAGLLQVRDALALRATSGAQLSQSLATPLPLVQAMLDRLTAMGKVERIEQDDGACLSGGCKSCPQPRGAARCSTG</sequence>
<comment type="function">
    <text evidence="1">May function as a transcriptional regulator that controls feoABC expression.</text>
</comment>
<comment type="similarity">
    <text evidence="1">Belongs to the FeoC family.</text>
</comment>